<organism>
    <name type="scientific">Haemophilus influenzae (strain ATCC 51907 / DSM 11121 / KW20 / Rd)</name>
    <dbReference type="NCBI Taxonomy" id="71421"/>
    <lineage>
        <taxon>Bacteria</taxon>
        <taxon>Pseudomonadati</taxon>
        <taxon>Pseudomonadota</taxon>
        <taxon>Gammaproteobacteria</taxon>
        <taxon>Pasteurellales</taxon>
        <taxon>Pasteurellaceae</taxon>
        <taxon>Haemophilus</taxon>
    </lineage>
</organism>
<gene>
    <name evidence="3" type="primary">lsgB</name>
    <name type="ordered locus">HI_1699</name>
</gene>
<comment type="function">
    <text evidence="2">Catalyzes the transfer of sialic acid from the substrate CMP-N-acetylneuraminate to the terminal galactose residue of the N-acetyllactosamine moiety of surface lipooligosaccharide (LOS). Thus, functions in the sialylation of LOS, which plays a role in the evasion of the host immune response.</text>
</comment>
<comment type="catalytic activity">
    <reaction evidence="1 5">
        <text>a beta-D-galactosyl-(1-&gt;4)-N-acetyl-beta-D-glucosaminyl derivative + CMP-N-acetyl-beta-neuraminate = an N-acetyl-alpha-neuraminyl-(2-&gt;3)-beta-D-galactosyl-(1-&gt;4)-N-acetyl-beta-D-glucosaminyl derivative + CMP + H(+)</text>
        <dbReference type="Rhea" id="RHEA:52316"/>
        <dbReference type="ChEBI" id="CHEBI:15378"/>
        <dbReference type="ChEBI" id="CHEBI:57812"/>
        <dbReference type="ChEBI" id="CHEBI:60377"/>
        <dbReference type="ChEBI" id="CHEBI:133507"/>
        <dbReference type="ChEBI" id="CHEBI:136545"/>
        <dbReference type="EC" id="2.4.3.6"/>
    </reaction>
</comment>
<comment type="pathway">
    <text evidence="2">Bacterial outer membrane biogenesis; lipooligosaccharide biosynthesis.</text>
</comment>
<comment type="disruption phenotype">
    <text evidence="2">Disruption of this gene results in persistence of sialylated glycoforms of lipooligosaccharide but a reduction in sialyl-N-acetyllactosamine-containing glycoforms.</text>
</comment>
<comment type="similarity">
    <text evidence="4">Belongs to the glycosyltransferase 52 family.</text>
</comment>
<proteinExistence type="inferred from homology"/>
<keyword id="KW-0328">Glycosyltransferase</keyword>
<keyword id="KW-0448">Lipopolysaccharide biosynthesis</keyword>
<keyword id="KW-1185">Reference proteome</keyword>
<keyword id="KW-0808">Transferase</keyword>
<sequence length="304" mass="35706">MNLMLCCTPLQVLIARKIIELHPNEQFFGVMFGGVWDKKRTLYASKLAEVCSDSMNIDTGKDLKGFDFLKLMRQLKNKITHKGFDKVFLANLNSLWLQTYLSHVSFKELYTFDDGSDNIFPHPNLLREPGTFKYKLIKAFIGDKYSVNKLFKKIKKHYTVYPNYKNIVSNIEPISLWDNQIDCEIDGEVSFFIGQPLLNTKEENISLIKKLKDQIPFDYYFPHPAEDYRVDGVNYVESELIFEDYVFKHLSNKKIIIYTFFSSVAFNLLSHPNVEIRFIRTSIPRWQFCYDSFPDLGLTIYKEI</sequence>
<dbReference type="EC" id="2.4.3.6" evidence="1 5"/>
<dbReference type="EMBL" id="M94855">
    <property type="protein sequence ID" value="AAA24979.1"/>
    <property type="molecule type" value="Genomic_DNA"/>
</dbReference>
<dbReference type="EMBL" id="L42023">
    <property type="protein sequence ID" value="AAC23345.1"/>
    <property type="molecule type" value="Genomic_DNA"/>
</dbReference>
<dbReference type="PIR" id="G64175">
    <property type="entry name" value="G64175"/>
</dbReference>
<dbReference type="RefSeq" id="NP_439841.1">
    <property type="nucleotide sequence ID" value="NC_000907.1"/>
</dbReference>
<dbReference type="SMR" id="Q48211"/>
<dbReference type="STRING" id="71421.HI_1699"/>
<dbReference type="CAZy" id="GT52">
    <property type="family name" value="Glycosyltransferase Family 52"/>
</dbReference>
<dbReference type="EnsemblBacteria" id="AAC23345">
    <property type="protein sequence ID" value="AAC23345"/>
    <property type="gene ID" value="HI_1699"/>
</dbReference>
<dbReference type="KEGG" id="hin:HI_1699"/>
<dbReference type="PATRIC" id="fig|71421.8.peg.1778"/>
<dbReference type="eggNOG" id="ENOG502ZAT3">
    <property type="taxonomic scope" value="Bacteria"/>
</dbReference>
<dbReference type="HOGENOM" id="CLU_076077_0_0_6"/>
<dbReference type="OrthoDB" id="2339372at2"/>
<dbReference type="BioCyc" id="HINF71421:G1GJ1-1715-MONOMER"/>
<dbReference type="UniPathway" id="UPA00501"/>
<dbReference type="Proteomes" id="UP000000579">
    <property type="component" value="Chromosome"/>
</dbReference>
<dbReference type="GO" id="GO:0008118">
    <property type="term" value="F:N-acetyllactosaminide alpha-2,3-sialyltransferase activity"/>
    <property type="evidence" value="ECO:0007669"/>
    <property type="project" value="RHEA"/>
</dbReference>
<dbReference type="GO" id="GO:0009103">
    <property type="term" value="P:lipopolysaccharide biosynthetic process"/>
    <property type="evidence" value="ECO:0007669"/>
    <property type="project" value="UniProtKB-KW"/>
</dbReference>
<dbReference type="Gene3D" id="3.30.370.20">
    <property type="match status" value="1"/>
</dbReference>
<dbReference type="InterPro" id="IPR012477">
    <property type="entry name" value="Glyco_transf_52"/>
</dbReference>
<dbReference type="Pfam" id="PF07922">
    <property type="entry name" value="Glyco_transf_52"/>
    <property type="match status" value="1"/>
</dbReference>
<protein>
    <recommendedName>
        <fullName evidence="5">N-acetyllactosaminide alpha-2,3-sialyltransferase</fullName>
        <ecNumber evidence="1 5">2.4.3.6</ecNumber>
    </recommendedName>
    <alternativeName>
        <fullName evidence="5">CMP-N-acetylneuraminate:beta-galactoside alpha-2,3-sialyltransferase</fullName>
        <shortName evidence="5">CMP-Neu5Ac:beta-galactoside alpha-2,3-sialyltransferase</shortName>
    </alternativeName>
    <alternativeName>
        <fullName evidence="3">Lipooligosaccharide sialyltransferase</fullName>
        <shortName evidence="3">LOS sialyltransferase</shortName>
    </alternativeName>
</protein>
<reference key="1">
    <citation type="submission" date="1992-06" db="EMBL/GenBank/DDBJ databases">
        <title>Characterization and sequence of the lsg locus from Haemophilus influenzae.</title>
        <authorList>
            <person name="McLaughlin R."/>
            <person name="Abu Kwaik Y."/>
            <person name="Young R."/>
            <person name="Spinola S."/>
            <person name="Apicella M."/>
        </authorList>
    </citation>
    <scope>NUCLEOTIDE SEQUENCE [GENOMIC DNA]</scope>
    <source>
        <strain>A2</strain>
    </source>
</reference>
<reference key="2">
    <citation type="journal article" date="1995" name="Science">
        <title>Whole-genome random sequencing and assembly of Haemophilus influenzae Rd.</title>
        <authorList>
            <person name="Fleischmann R.D."/>
            <person name="Adams M.D."/>
            <person name="White O."/>
            <person name="Clayton R.A."/>
            <person name="Kirkness E.F."/>
            <person name="Kerlavage A.R."/>
            <person name="Bult C.J."/>
            <person name="Tomb J.-F."/>
            <person name="Dougherty B.A."/>
            <person name="Merrick J.M."/>
            <person name="McKenney K."/>
            <person name="Sutton G.G."/>
            <person name="FitzHugh W."/>
            <person name="Fields C.A."/>
            <person name="Gocayne J.D."/>
            <person name="Scott J.D."/>
            <person name="Shirley R."/>
            <person name="Liu L.-I."/>
            <person name="Glodek A."/>
            <person name="Kelley J.M."/>
            <person name="Weidman J.F."/>
            <person name="Phillips C.A."/>
            <person name="Spriggs T."/>
            <person name="Hedblom E."/>
            <person name="Cotton M.D."/>
            <person name="Utterback T.R."/>
            <person name="Hanna M.C."/>
            <person name="Nguyen D.T."/>
            <person name="Saudek D.M."/>
            <person name="Brandon R.C."/>
            <person name="Fine L.D."/>
            <person name="Fritchman J.L."/>
            <person name="Fuhrmann J.L."/>
            <person name="Geoghagen N.S.M."/>
            <person name="Gnehm C.L."/>
            <person name="McDonald L.A."/>
            <person name="Small K.V."/>
            <person name="Fraser C.M."/>
            <person name="Smith H.O."/>
            <person name="Venter J.C."/>
        </authorList>
    </citation>
    <scope>NUCLEOTIDE SEQUENCE [LARGE SCALE GENOMIC DNA]</scope>
    <source>
        <strain>ATCC 51907 / DSM 11121 / KW20 / Rd</strain>
    </source>
</reference>
<reference key="3">
    <citation type="journal article" date="2002" name="J. Biol. Chem.">
        <title>Haemophilus influenzae type b strain A2 has multiple sialyltransferases involved in lipooligosaccharide sialylation.</title>
        <authorList>
            <person name="Jones P.A."/>
            <person name="Samuels N.M."/>
            <person name="Phillips N.J."/>
            <person name="Munson R.S. Jr."/>
            <person name="Bozue J.A."/>
            <person name="Arseneau J.A."/>
            <person name="Nichols W.A."/>
            <person name="Zaleski A."/>
            <person name="Gibson B.W."/>
            <person name="Apicella M.A."/>
        </authorList>
    </citation>
    <scope>FUNCTION</scope>
    <scope>DISRUPTION PHENOTYPE</scope>
    <scope>PATHWAY</scope>
    <source>
        <strain>A2</strain>
    </source>
</reference>
<name>LST_HAEIN</name>
<evidence type="ECO:0000250" key="1">
    <source>
        <dbReference type="UniProtKB" id="P72097"/>
    </source>
</evidence>
<evidence type="ECO:0000269" key="2">
    <source>
    </source>
</evidence>
<evidence type="ECO:0000303" key="3">
    <source>
    </source>
</evidence>
<evidence type="ECO:0000305" key="4"/>
<evidence type="ECO:0000305" key="5">
    <source>
    </source>
</evidence>
<feature type="chain" id="PRO_0000080571" description="N-acetyllactosaminide alpha-2,3-sialyltransferase">
    <location>
        <begin position="1"/>
        <end position="304"/>
    </location>
</feature>
<feature type="active site" description="Proton donor" evidence="1">
    <location>
        <position position="223"/>
    </location>
</feature>
<feature type="binding site" evidence="1">
    <location>
        <begin position="221"/>
        <end position="225"/>
    </location>
    <ligand>
        <name>CMP-N-acetyl-beta-neuraminate</name>
        <dbReference type="ChEBI" id="CHEBI:57812"/>
    </ligand>
</feature>
<feature type="binding site" evidence="1">
    <location>
        <begin position="242"/>
        <end position="243"/>
    </location>
    <ligand>
        <name>CMP-N-acetyl-beta-neuraminate</name>
        <dbReference type="ChEBI" id="CHEBI:57812"/>
    </ligand>
</feature>
<feature type="binding site" evidence="1">
    <location>
        <begin position="262"/>
        <end position="263"/>
    </location>
    <ligand>
        <name>CMP-N-acetyl-beta-neuraminate</name>
        <dbReference type="ChEBI" id="CHEBI:57812"/>
    </ligand>
</feature>
<feature type="sequence conflict" description="In Ref. 1; AAA24979." evidence="4" ref="1">
    <original>M</original>
    <variation>I</variation>
    <location>
        <position position="4"/>
    </location>
</feature>
<feature type="sequence conflict" description="In Ref. 1; AAA24979." evidence="4" ref="1">
    <original>F</original>
    <variation>S</variation>
    <location>
        <position position="68"/>
    </location>
</feature>
<feature type="sequence conflict" description="In Ref. 1; AAA24979." evidence="4" ref="1">
    <original>G</original>
    <variation>D</variation>
    <location>
        <position position="130"/>
    </location>
</feature>
<feature type="sequence conflict" description="In Ref. 1; AAA24979." evidence="4" ref="1">
    <original>Y</original>
    <variation>C</variation>
    <location>
        <position position="220"/>
    </location>
</feature>
<accession>Q48211</accession>
<accession>O05084</accession>